<comment type="catalytic activity">
    <reaction evidence="1">
        <text>(S)-4-hydroxy-2-oxopentanoate = acetaldehyde + pyruvate</text>
        <dbReference type="Rhea" id="RHEA:22624"/>
        <dbReference type="ChEBI" id="CHEBI:15343"/>
        <dbReference type="ChEBI" id="CHEBI:15361"/>
        <dbReference type="ChEBI" id="CHEBI:73143"/>
        <dbReference type="EC" id="4.1.3.39"/>
    </reaction>
</comment>
<comment type="similarity">
    <text evidence="1">Belongs to the 4-hydroxy-2-oxovalerate aldolase family.</text>
</comment>
<accession>A3Q6M9</accession>
<feature type="chain" id="PRO_0000387857" description="4-hydroxy-2-oxovalerate aldolase 2">
    <location>
        <begin position="1"/>
        <end position="353"/>
    </location>
</feature>
<feature type="domain" description="Pyruvate carboxyltransferase" evidence="1">
    <location>
        <begin position="14"/>
        <end position="266"/>
    </location>
</feature>
<feature type="active site" description="Proton acceptor" evidence="1">
    <location>
        <position position="26"/>
    </location>
</feature>
<feature type="binding site" evidence="1">
    <location>
        <begin position="22"/>
        <end position="23"/>
    </location>
    <ligand>
        <name>substrate</name>
    </ligand>
</feature>
<feature type="binding site" evidence="1">
    <location>
        <position position="23"/>
    </location>
    <ligand>
        <name>Mn(2+)</name>
        <dbReference type="ChEBI" id="CHEBI:29035"/>
    </ligand>
</feature>
<feature type="binding site" evidence="1">
    <location>
        <position position="176"/>
    </location>
    <ligand>
        <name>substrate</name>
    </ligand>
</feature>
<feature type="binding site" evidence="1">
    <location>
        <position position="205"/>
    </location>
    <ligand>
        <name>Mn(2+)</name>
        <dbReference type="ChEBI" id="CHEBI:29035"/>
    </ligand>
</feature>
<feature type="binding site" evidence="1">
    <location>
        <position position="205"/>
    </location>
    <ligand>
        <name>substrate</name>
    </ligand>
</feature>
<feature type="binding site" evidence="1">
    <location>
        <position position="207"/>
    </location>
    <ligand>
        <name>Mn(2+)</name>
        <dbReference type="ChEBI" id="CHEBI:29035"/>
    </ligand>
</feature>
<feature type="binding site" evidence="1">
    <location>
        <position position="296"/>
    </location>
    <ligand>
        <name>substrate</name>
    </ligand>
</feature>
<feature type="site" description="Transition state stabilizer" evidence="1">
    <location>
        <position position="22"/>
    </location>
</feature>
<evidence type="ECO:0000255" key="1">
    <source>
        <dbReference type="HAMAP-Rule" id="MF_01656"/>
    </source>
</evidence>
<organism>
    <name type="scientific">Mycobacterium sp. (strain JLS)</name>
    <dbReference type="NCBI Taxonomy" id="164757"/>
    <lineage>
        <taxon>Bacteria</taxon>
        <taxon>Bacillati</taxon>
        <taxon>Actinomycetota</taxon>
        <taxon>Actinomycetes</taxon>
        <taxon>Mycobacteriales</taxon>
        <taxon>Mycobacteriaceae</taxon>
        <taxon>Mycobacterium</taxon>
    </lineage>
</organism>
<gene>
    <name type="ordered locus">Mjls_5042</name>
</gene>
<reference key="1">
    <citation type="submission" date="2007-02" db="EMBL/GenBank/DDBJ databases">
        <title>Complete sequence of Mycobacterium sp. JLS.</title>
        <authorList>
            <consortium name="US DOE Joint Genome Institute"/>
            <person name="Copeland A."/>
            <person name="Lucas S."/>
            <person name="Lapidus A."/>
            <person name="Barry K."/>
            <person name="Detter J.C."/>
            <person name="Glavina del Rio T."/>
            <person name="Hammon N."/>
            <person name="Israni S."/>
            <person name="Dalin E."/>
            <person name="Tice H."/>
            <person name="Pitluck S."/>
            <person name="Chain P."/>
            <person name="Malfatti S."/>
            <person name="Shin M."/>
            <person name="Vergez L."/>
            <person name="Schmutz J."/>
            <person name="Larimer F."/>
            <person name="Land M."/>
            <person name="Hauser L."/>
            <person name="Kyrpides N."/>
            <person name="Mikhailova N."/>
            <person name="Miller C.D."/>
            <person name="Anderson A.J."/>
            <person name="Sims R.C."/>
            <person name="Richardson P."/>
        </authorList>
    </citation>
    <scope>NUCLEOTIDE SEQUENCE [LARGE SCALE GENOMIC DNA]</scope>
    <source>
        <strain>JLS</strain>
    </source>
</reference>
<dbReference type="EC" id="4.1.3.39" evidence="1"/>
<dbReference type="EMBL" id="CP000580">
    <property type="protein sequence ID" value="ABO00807.1"/>
    <property type="molecule type" value="Genomic_DNA"/>
</dbReference>
<dbReference type="SMR" id="A3Q6M9"/>
<dbReference type="KEGG" id="mjl:Mjls_5042"/>
<dbReference type="HOGENOM" id="CLU_049173_0_0_11"/>
<dbReference type="BioCyc" id="MSP164757:G1G8C-5093-MONOMER"/>
<dbReference type="GO" id="GO:0003852">
    <property type="term" value="F:2-isopropylmalate synthase activity"/>
    <property type="evidence" value="ECO:0007669"/>
    <property type="project" value="TreeGrafter"/>
</dbReference>
<dbReference type="GO" id="GO:0008701">
    <property type="term" value="F:4-hydroxy-2-oxovalerate aldolase activity"/>
    <property type="evidence" value="ECO:0007669"/>
    <property type="project" value="UniProtKB-UniRule"/>
</dbReference>
<dbReference type="GO" id="GO:0030145">
    <property type="term" value="F:manganese ion binding"/>
    <property type="evidence" value="ECO:0007669"/>
    <property type="project" value="UniProtKB-UniRule"/>
</dbReference>
<dbReference type="GO" id="GO:0009056">
    <property type="term" value="P:catabolic process"/>
    <property type="evidence" value="ECO:0007669"/>
    <property type="project" value="UniProtKB-KW"/>
</dbReference>
<dbReference type="GO" id="GO:0009098">
    <property type="term" value="P:L-leucine biosynthetic process"/>
    <property type="evidence" value="ECO:0007669"/>
    <property type="project" value="TreeGrafter"/>
</dbReference>
<dbReference type="CDD" id="cd07943">
    <property type="entry name" value="DRE_TIM_HOA"/>
    <property type="match status" value="1"/>
</dbReference>
<dbReference type="FunFam" id="3.20.20.70:FF:000072">
    <property type="entry name" value="4-hydroxy-2-oxovalerate aldolase"/>
    <property type="match status" value="1"/>
</dbReference>
<dbReference type="Gene3D" id="1.10.8.60">
    <property type="match status" value="1"/>
</dbReference>
<dbReference type="Gene3D" id="3.20.20.70">
    <property type="entry name" value="Aldolase class I"/>
    <property type="match status" value="1"/>
</dbReference>
<dbReference type="HAMAP" id="MF_01656">
    <property type="entry name" value="HOA"/>
    <property type="match status" value="1"/>
</dbReference>
<dbReference type="InterPro" id="IPR050073">
    <property type="entry name" value="2-IPM_HCS-like"/>
</dbReference>
<dbReference type="InterPro" id="IPR017629">
    <property type="entry name" value="4OH_2_O-val_aldolase"/>
</dbReference>
<dbReference type="InterPro" id="IPR013785">
    <property type="entry name" value="Aldolase_TIM"/>
</dbReference>
<dbReference type="InterPro" id="IPR012425">
    <property type="entry name" value="DmpG_comm"/>
</dbReference>
<dbReference type="InterPro" id="IPR035685">
    <property type="entry name" value="DRE_TIM_HOA"/>
</dbReference>
<dbReference type="InterPro" id="IPR000891">
    <property type="entry name" value="PYR_CT"/>
</dbReference>
<dbReference type="NCBIfam" id="TIGR03217">
    <property type="entry name" value="4OH_2_O_val_ald"/>
    <property type="match status" value="1"/>
</dbReference>
<dbReference type="NCBIfam" id="NF006049">
    <property type="entry name" value="PRK08195.1"/>
    <property type="match status" value="1"/>
</dbReference>
<dbReference type="PANTHER" id="PTHR10277:SF9">
    <property type="entry name" value="2-ISOPROPYLMALATE SYNTHASE 1, CHLOROPLASTIC-RELATED"/>
    <property type="match status" value="1"/>
</dbReference>
<dbReference type="PANTHER" id="PTHR10277">
    <property type="entry name" value="HOMOCITRATE SYNTHASE-RELATED"/>
    <property type="match status" value="1"/>
</dbReference>
<dbReference type="Pfam" id="PF07836">
    <property type="entry name" value="DmpG_comm"/>
    <property type="match status" value="1"/>
</dbReference>
<dbReference type="Pfam" id="PF00682">
    <property type="entry name" value="HMGL-like"/>
    <property type="match status" value="1"/>
</dbReference>
<dbReference type="SUPFAM" id="SSF51569">
    <property type="entry name" value="Aldolase"/>
    <property type="match status" value="1"/>
</dbReference>
<dbReference type="SUPFAM" id="SSF89000">
    <property type="entry name" value="post-HMGL domain-like"/>
    <property type="match status" value="1"/>
</dbReference>
<dbReference type="PROSITE" id="PS50991">
    <property type="entry name" value="PYR_CT"/>
    <property type="match status" value="1"/>
</dbReference>
<sequence>MSTKDIFFNPIWDVRMTDTSLRDGSHHKRHQFTKDEVGAIVAALDTAGVPVIEVTHGDGLGGSSFNYGFSKTPEQELIKLAAETAKEAKIAFLMLPGVGTKEDIKEAQNNGGSICRIATHCTEADVSIQHFGLARELGLETVGFLMMSHTIPPEKLAQQARIMADAGCQCVYVVDSAGALVLEGVRDRVAALVAELGSDAQVGFHGHENLGLGVANSVEAVRAGAKQIDGSCRRFGAGAGNAPVEALIGVFDKIGVKTGIDFFDIADAAEEVVAPAMPAECLLDRNALIMGYSGVYSSFLKHAIRQSERYGVPAHQLLHRAGQRKLIGGQEDQLIDIALEIKREQDSGATAAH</sequence>
<keyword id="KW-0058">Aromatic hydrocarbons catabolism</keyword>
<keyword id="KW-0456">Lyase</keyword>
<keyword id="KW-0464">Manganese</keyword>
<keyword id="KW-0479">Metal-binding</keyword>
<name>HOA2_MYCSJ</name>
<protein>
    <recommendedName>
        <fullName evidence="1">4-hydroxy-2-oxovalerate aldolase 2</fullName>
        <shortName evidence="1">HOA 2</shortName>
        <ecNumber evidence="1">4.1.3.39</ecNumber>
    </recommendedName>
    <alternativeName>
        <fullName evidence="1">4-hydroxy-2-keto-pentanoic acid aldolase 2</fullName>
    </alternativeName>
    <alternativeName>
        <fullName evidence="1">4-hydroxy-2-oxopentanoate aldolase 2</fullName>
    </alternativeName>
</protein>
<proteinExistence type="inferred from homology"/>